<evidence type="ECO:0000255" key="1">
    <source>
        <dbReference type="HAMAP-Rule" id="MF_00765"/>
    </source>
</evidence>
<evidence type="ECO:0000256" key="2">
    <source>
        <dbReference type="SAM" id="MobiDB-lite"/>
    </source>
</evidence>
<evidence type="ECO:0000305" key="3"/>
<accession>Q7W3Y8</accession>
<protein>
    <recommendedName>
        <fullName evidence="1">Dual-action ribosomal maturation protein DarP</fullName>
    </recommendedName>
    <alternativeName>
        <fullName evidence="1">Large ribosomal subunit assembly factor DarP</fullName>
    </alternativeName>
</protein>
<name>DARP_BORPA</name>
<sequence length="183" mass="21002">MSSHSQEPVGEENFDDSEYDRPSKSQVKREMHALLDLGKELVELSPERLRQLPLEERLYEAIREAQRTTGREGRRRQIHFVGKLMRSAPAEAIRAQLDTWRNGSREETAAMHRLEALRERLLKDDDALTAVLQRNPDADIQHLRALIRAARKEAAANAALSQGQEPQRKQYRALFQALKNLSA</sequence>
<proteinExistence type="inferred from homology"/>
<reference key="1">
    <citation type="journal article" date="2003" name="Nat. Genet.">
        <title>Comparative analysis of the genome sequences of Bordetella pertussis, Bordetella parapertussis and Bordetella bronchiseptica.</title>
        <authorList>
            <person name="Parkhill J."/>
            <person name="Sebaihia M."/>
            <person name="Preston A."/>
            <person name="Murphy L.D."/>
            <person name="Thomson N.R."/>
            <person name="Harris D.E."/>
            <person name="Holden M.T.G."/>
            <person name="Churcher C.M."/>
            <person name="Bentley S.D."/>
            <person name="Mungall K.L."/>
            <person name="Cerdeno-Tarraga A.-M."/>
            <person name="Temple L."/>
            <person name="James K.D."/>
            <person name="Harris B."/>
            <person name="Quail M.A."/>
            <person name="Achtman M."/>
            <person name="Atkin R."/>
            <person name="Baker S."/>
            <person name="Basham D."/>
            <person name="Bason N."/>
            <person name="Cherevach I."/>
            <person name="Chillingworth T."/>
            <person name="Collins M."/>
            <person name="Cronin A."/>
            <person name="Davis P."/>
            <person name="Doggett J."/>
            <person name="Feltwell T."/>
            <person name="Goble A."/>
            <person name="Hamlin N."/>
            <person name="Hauser H."/>
            <person name="Holroyd S."/>
            <person name="Jagels K."/>
            <person name="Leather S."/>
            <person name="Moule S."/>
            <person name="Norberczak H."/>
            <person name="O'Neil S."/>
            <person name="Ormond D."/>
            <person name="Price C."/>
            <person name="Rabbinowitsch E."/>
            <person name="Rutter S."/>
            <person name="Sanders M."/>
            <person name="Saunders D."/>
            <person name="Seeger K."/>
            <person name="Sharp S."/>
            <person name="Simmonds M."/>
            <person name="Skelton J."/>
            <person name="Squares R."/>
            <person name="Squares S."/>
            <person name="Stevens K."/>
            <person name="Unwin L."/>
            <person name="Whitehead S."/>
            <person name="Barrell B.G."/>
            <person name="Maskell D.J."/>
        </authorList>
    </citation>
    <scope>NUCLEOTIDE SEQUENCE [LARGE SCALE GENOMIC DNA]</scope>
    <source>
        <strain>12822 / ATCC BAA-587 / NCTC 13253</strain>
    </source>
</reference>
<comment type="function">
    <text evidence="1">Member of a network of 50S ribosomal subunit biogenesis factors which assembles along the 30S-50S interface, preventing incorrect 23S rRNA structures from forming. Promotes peptidyl transferase center (PTC) maturation.</text>
</comment>
<comment type="subcellular location">
    <subcellularLocation>
        <location evidence="1">Cytoplasm</location>
    </subcellularLocation>
    <text evidence="1">Associates with late stage pre-50S ribosomal subunits.</text>
</comment>
<comment type="similarity">
    <text evidence="1">Belongs to the DarP family.</text>
</comment>
<comment type="sequence caution" evidence="3">
    <conflict type="erroneous initiation">
        <sequence resource="EMBL-CDS" id="CAE39170"/>
    </conflict>
    <text>Extended N-terminus.</text>
</comment>
<gene>
    <name evidence="1" type="primary">darP</name>
    <name type="ordered locus">BPP3887</name>
</gene>
<organism>
    <name type="scientific">Bordetella parapertussis (strain 12822 / ATCC BAA-587 / NCTC 13253)</name>
    <dbReference type="NCBI Taxonomy" id="257311"/>
    <lineage>
        <taxon>Bacteria</taxon>
        <taxon>Pseudomonadati</taxon>
        <taxon>Pseudomonadota</taxon>
        <taxon>Betaproteobacteria</taxon>
        <taxon>Burkholderiales</taxon>
        <taxon>Alcaligenaceae</taxon>
        <taxon>Bordetella</taxon>
    </lineage>
</organism>
<feature type="chain" id="PRO_0000208210" description="Dual-action ribosomal maturation protein DarP">
    <location>
        <begin position="1"/>
        <end position="183"/>
    </location>
</feature>
<feature type="region of interest" description="Disordered" evidence="2">
    <location>
        <begin position="1"/>
        <end position="27"/>
    </location>
</feature>
<feature type="compositionally biased region" description="Acidic residues" evidence="2">
    <location>
        <begin position="9"/>
        <end position="18"/>
    </location>
</feature>
<keyword id="KW-0963">Cytoplasm</keyword>
<keyword id="KW-0690">Ribosome biogenesis</keyword>
<keyword id="KW-0694">RNA-binding</keyword>
<keyword id="KW-0699">rRNA-binding</keyword>
<dbReference type="EMBL" id="BX640435">
    <property type="protein sequence ID" value="CAE39170.1"/>
    <property type="status" value="ALT_INIT"/>
    <property type="molecule type" value="Genomic_DNA"/>
</dbReference>
<dbReference type="SMR" id="Q7W3Y8"/>
<dbReference type="KEGG" id="bpa:BPP3887"/>
<dbReference type="HOGENOM" id="CLU_106757_1_0_4"/>
<dbReference type="Proteomes" id="UP000001421">
    <property type="component" value="Chromosome"/>
</dbReference>
<dbReference type="GO" id="GO:0005829">
    <property type="term" value="C:cytosol"/>
    <property type="evidence" value="ECO:0007669"/>
    <property type="project" value="TreeGrafter"/>
</dbReference>
<dbReference type="GO" id="GO:0043022">
    <property type="term" value="F:ribosome binding"/>
    <property type="evidence" value="ECO:0007669"/>
    <property type="project" value="UniProtKB-UniRule"/>
</dbReference>
<dbReference type="GO" id="GO:0019843">
    <property type="term" value="F:rRNA binding"/>
    <property type="evidence" value="ECO:0007669"/>
    <property type="project" value="UniProtKB-UniRule"/>
</dbReference>
<dbReference type="GO" id="GO:1902626">
    <property type="term" value="P:assembly of large subunit precursor of preribosome"/>
    <property type="evidence" value="ECO:0007669"/>
    <property type="project" value="UniProtKB-UniRule"/>
</dbReference>
<dbReference type="CDD" id="cd16331">
    <property type="entry name" value="YjgA-like"/>
    <property type="match status" value="1"/>
</dbReference>
<dbReference type="Gene3D" id="1.10.60.30">
    <property type="entry name" value="PSPTO4464-like domains"/>
    <property type="match status" value="2"/>
</dbReference>
<dbReference type="HAMAP" id="MF_00765">
    <property type="entry name" value="DarP"/>
    <property type="match status" value="1"/>
</dbReference>
<dbReference type="InterPro" id="IPR006839">
    <property type="entry name" value="DarP"/>
</dbReference>
<dbReference type="InterPro" id="IPR023153">
    <property type="entry name" value="DarP_sf"/>
</dbReference>
<dbReference type="NCBIfam" id="NF003593">
    <property type="entry name" value="PRK05255.1-1"/>
    <property type="match status" value="1"/>
</dbReference>
<dbReference type="PANTHER" id="PTHR38101">
    <property type="entry name" value="UPF0307 PROTEIN YJGA"/>
    <property type="match status" value="1"/>
</dbReference>
<dbReference type="PANTHER" id="PTHR38101:SF1">
    <property type="entry name" value="UPF0307 PROTEIN YJGA"/>
    <property type="match status" value="1"/>
</dbReference>
<dbReference type="Pfam" id="PF04751">
    <property type="entry name" value="DarP"/>
    <property type="match status" value="1"/>
</dbReference>
<dbReference type="PIRSF" id="PIRSF016183">
    <property type="entry name" value="UCP016183"/>
    <property type="match status" value="1"/>
</dbReference>
<dbReference type="SUPFAM" id="SSF158710">
    <property type="entry name" value="PSPTO4464-like"/>
    <property type="match status" value="1"/>
</dbReference>